<dbReference type="EC" id="6.3.5.2" evidence="1"/>
<dbReference type="EMBL" id="CP001113">
    <property type="protein sequence ID" value="ACF64532.1"/>
    <property type="molecule type" value="Genomic_DNA"/>
</dbReference>
<dbReference type="RefSeq" id="WP_000138291.1">
    <property type="nucleotide sequence ID" value="NC_011080.1"/>
</dbReference>
<dbReference type="SMR" id="B4T0N7"/>
<dbReference type="MEROPS" id="C26.957"/>
<dbReference type="KEGG" id="see:SNSL254_A2703"/>
<dbReference type="HOGENOM" id="CLU_014340_0_5_6"/>
<dbReference type="UniPathway" id="UPA00189">
    <property type="reaction ID" value="UER00296"/>
</dbReference>
<dbReference type="Proteomes" id="UP000008824">
    <property type="component" value="Chromosome"/>
</dbReference>
<dbReference type="GO" id="GO:0005829">
    <property type="term" value="C:cytosol"/>
    <property type="evidence" value="ECO:0007669"/>
    <property type="project" value="TreeGrafter"/>
</dbReference>
<dbReference type="GO" id="GO:0005524">
    <property type="term" value="F:ATP binding"/>
    <property type="evidence" value="ECO:0007669"/>
    <property type="project" value="UniProtKB-UniRule"/>
</dbReference>
<dbReference type="GO" id="GO:0003921">
    <property type="term" value="F:GMP synthase activity"/>
    <property type="evidence" value="ECO:0007669"/>
    <property type="project" value="InterPro"/>
</dbReference>
<dbReference type="CDD" id="cd01742">
    <property type="entry name" value="GATase1_GMP_Synthase"/>
    <property type="match status" value="1"/>
</dbReference>
<dbReference type="CDD" id="cd01997">
    <property type="entry name" value="GMP_synthase_C"/>
    <property type="match status" value="1"/>
</dbReference>
<dbReference type="FunFam" id="3.30.300.10:FF:000002">
    <property type="entry name" value="GMP synthase [glutamine-hydrolyzing]"/>
    <property type="match status" value="1"/>
</dbReference>
<dbReference type="FunFam" id="3.40.50.620:FF:000001">
    <property type="entry name" value="GMP synthase [glutamine-hydrolyzing]"/>
    <property type="match status" value="1"/>
</dbReference>
<dbReference type="FunFam" id="3.40.50.880:FF:000001">
    <property type="entry name" value="GMP synthase [glutamine-hydrolyzing]"/>
    <property type="match status" value="1"/>
</dbReference>
<dbReference type="Gene3D" id="3.30.300.10">
    <property type="match status" value="1"/>
</dbReference>
<dbReference type="Gene3D" id="3.40.50.880">
    <property type="match status" value="1"/>
</dbReference>
<dbReference type="Gene3D" id="3.40.50.620">
    <property type="entry name" value="HUPs"/>
    <property type="match status" value="1"/>
</dbReference>
<dbReference type="HAMAP" id="MF_00344">
    <property type="entry name" value="GMP_synthase"/>
    <property type="match status" value="1"/>
</dbReference>
<dbReference type="InterPro" id="IPR029062">
    <property type="entry name" value="Class_I_gatase-like"/>
</dbReference>
<dbReference type="InterPro" id="IPR017926">
    <property type="entry name" value="GATASE"/>
</dbReference>
<dbReference type="InterPro" id="IPR001674">
    <property type="entry name" value="GMP_synth_C"/>
</dbReference>
<dbReference type="InterPro" id="IPR004739">
    <property type="entry name" value="GMP_synth_GATase"/>
</dbReference>
<dbReference type="InterPro" id="IPR022955">
    <property type="entry name" value="GMP_synthase"/>
</dbReference>
<dbReference type="InterPro" id="IPR025777">
    <property type="entry name" value="GMPS_ATP_PPase_dom"/>
</dbReference>
<dbReference type="InterPro" id="IPR022310">
    <property type="entry name" value="NAD/GMP_synthase"/>
</dbReference>
<dbReference type="InterPro" id="IPR014729">
    <property type="entry name" value="Rossmann-like_a/b/a_fold"/>
</dbReference>
<dbReference type="NCBIfam" id="TIGR00884">
    <property type="entry name" value="guaA_Cterm"/>
    <property type="match status" value="1"/>
</dbReference>
<dbReference type="NCBIfam" id="TIGR00888">
    <property type="entry name" value="guaA_Nterm"/>
    <property type="match status" value="1"/>
</dbReference>
<dbReference type="NCBIfam" id="NF000848">
    <property type="entry name" value="PRK00074.1"/>
    <property type="match status" value="1"/>
</dbReference>
<dbReference type="PANTHER" id="PTHR11922:SF2">
    <property type="entry name" value="GMP SYNTHASE [GLUTAMINE-HYDROLYZING]"/>
    <property type="match status" value="1"/>
</dbReference>
<dbReference type="PANTHER" id="PTHR11922">
    <property type="entry name" value="GMP SYNTHASE-RELATED"/>
    <property type="match status" value="1"/>
</dbReference>
<dbReference type="Pfam" id="PF00117">
    <property type="entry name" value="GATase"/>
    <property type="match status" value="1"/>
</dbReference>
<dbReference type="Pfam" id="PF00958">
    <property type="entry name" value="GMP_synt_C"/>
    <property type="match status" value="1"/>
</dbReference>
<dbReference type="Pfam" id="PF02540">
    <property type="entry name" value="NAD_synthase"/>
    <property type="match status" value="1"/>
</dbReference>
<dbReference type="PRINTS" id="PR00097">
    <property type="entry name" value="ANTSNTHASEII"/>
</dbReference>
<dbReference type="PRINTS" id="PR00099">
    <property type="entry name" value="CPSGATASE"/>
</dbReference>
<dbReference type="PRINTS" id="PR00096">
    <property type="entry name" value="GATASE"/>
</dbReference>
<dbReference type="SUPFAM" id="SSF52402">
    <property type="entry name" value="Adenine nucleotide alpha hydrolases-like"/>
    <property type="match status" value="1"/>
</dbReference>
<dbReference type="SUPFAM" id="SSF52317">
    <property type="entry name" value="Class I glutamine amidotransferase-like"/>
    <property type="match status" value="1"/>
</dbReference>
<dbReference type="SUPFAM" id="SSF54810">
    <property type="entry name" value="GMP synthetase C-terminal dimerisation domain"/>
    <property type="match status" value="1"/>
</dbReference>
<dbReference type="PROSITE" id="PS51273">
    <property type="entry name" value="GATASE_TYPE_1"/>
    <property type="match status" value="1"/>
</dbReference>
<dbReference type="PROSITE" id="PS51553">
    <property type="entry name" value="GMPS_ATP_PPASE"/>
    <property type="match status" value="1"/>
</dbReference>
<name>GUAA_SALNS</name>
<accession>B4T0N7</accession>
<organism>
    <name type="scientific">Salmonella newport (strain SL254)</name>
    <dbReference type="NCBI Taxonomy" id="423368"/>
    <lineage>
        <taxon>Bacteria</taxon>
        <taxon>Pseudomonadati</taxon>
        <taxon>Pseudomonadota</taxon>
        <taxon>Gammaproteobacteria</taxon>
        <taxon>Enterobacterales</taxon>
        <taxon>Enterobacteriaceae</taxon>
        <taxon>Salmonella</taxon>
    </lineage>
</organism>
<keyword id="KW-0067">ATP-binding</keyword>
<keyword id="KW-0315">Glutamine amidotransferase</keyword>
<keyword id="KW-0332">GMP biosynthesis</keyword>
<keyword id="KW-0436">Ligase</keyword>
<keyword id="KW-0547">Nucleotide-binding</keyword>
<keyword id="KW-0658">Purine biosynthesis</keyword>
<evidence type="ECO:0000255" key="1">
    <source>
        <dbReference type="HAMAP-Rule" id="MF_00344"/>
    </source>
</evidence>
<sequence length="525" mass="58670">MTENIHKHRILILDFGSQYTQLVARRVRELGVYCELWAWDVTEAQIRDFNPSGIILSGGPESTTEENSPRAPQYVFEAGVPVFGVCYGMQTMAMQLGGHVEGSNEREFGYAQVEVLTDSALVRGIEDSLTADGKPLLDVWMSHGDKVTAIPSDFVAVASTESCPFAIMANEEKRFYGVQFHPEVTHTRQGMRMLERFVRDICQCEALWTPAKIIDDAVARIREQVGDDKVILGLSGGVDSSVTAMLLHRAIGKNLTCVFVDNGLLRLNEAEQVMDMFGDHFGLNIVHVPAEERFLSALAGENDPEAKRKIIGRVFVEVFDEEALKLEDVKWLAQGTIYPDVIESAASATGKAHVIKSHHNVGGLPKEMKMGLVEPLKELFKDEVRKIGLELGLPYDMLYRHPFPGPGLGVRVLGEVKKEYCDLLRRADAIFIEELRKADLYDKVSQAFTVFLPVRSVGVMGDGRKYDWVVSLRAVETIDFMTAHWAHLPYDFLGRVSNRIINEVNGISRVVYDISGKPPATIEWE</sequence>
<feature type="chain" id="PRO_1000120392" description="GMP synthase [glutamine-hydrolyzing]">
    <location>
        <begin position="1"/>
        <end position="525"/>
    </location>
</feature>
<feature type="domain" description="Glutamine amidotransferase type-1" evidence="1">
    <location>
        <begin position="9"/>
        <end position="207"/>
    </location>
</feature>
<feature type="domain" description="GMPS ATP-PPase" evidence="1">
    <location>
        <begin position="208"/>
        <end position="400"/>
    </location>
</feature>
<feature type="active site" description="Nucleophile" evidence="1">
    <location>
        <position position="86"/>
    </location>
</feature>
<feature type="active site" evidence="1">
    <location>
        <position position="181"/>
    </location>
</feature>
<feature type="active site" evidence="1">
    <location>
        <position position="183"/>
    </location>
</feature>
<feature type="binding site" evidence="1">
    <location>
        <begin position="235"/>
        <end position="241"/>
    </location>
    <ligand>
        <name>ATP</name>
        <dbReference type="ChEBI" id="CHEBI:30616"/>
    </ligand>
</feature>
<gene>
    <name evidence="1" type="primary">guaA</name>
    <name type="ordered locus">SNSL254_A2703</name>
</gene>
<reference key="1">
    <citation type="journal article" date="2011" name="J. Bacteriol.">
        <title>Comparative genomics of 28 Salmonella enterica isolates: evidence for CRISPR-mediated adaptive sublineage evolution.</title>
        <authorList>
            <person name="Fricke W.F."/>
            <person name="Mammel M.K."/>
            <person name="McDermott P.F."/>
            <person name="Tartera C."/>
            <person name="White D.G."/>
            <person name="Leclerc J.E."/>
            <person name="Ravel J."/>
            <person name="Cebula T.A."/>
        </authorList>
    </citation>
    <scope>NUCLEOTIDE SEQUENCE [LARGE SCALE GENOMIC DNA]</scope>
    <source>
        <strain>SL254</strain>
    </source>
</reference>
<comment type="function">
    <text evidence="1">Catalyzes the synthesis of GMP from XMP.</text>
</comment>
<comment type="catalytic activity">
    <reaction evidence="1">
        <text>XMP + L-glutamine + ATP + H2O = GMP + L-glutamate + AMP + diphosphate + 2 H(+)</text>
        <dbReference type="Rhea" id="RHEA:11680"/>
        <dbReference type="ChEBI" id="CHEBI:15377"/>
        <dbReference type="ChEBI" id="CHEBI:15378"/>
        <dbReference type="ChEBI" id="CHEBI:29985"/>
        <dbReference type="ChEBI" id="CHEBI:30616"/>
        <dbReference type="ChEBI" id="CHEBI:33019"/>
        <dbReference type="ChEBI" id="CHEBI:57464"/>
        <dbReference type="ChEBI" id="CHEBI:58115"/>
        <dbReference type="ChEBI" id="CHEBI:58359"/>
        <dbReference type="ChEBI" id="CHEBI:456215"/>
        <dbReference type="EC" id="6.3.5.2"/>
    </reaction>
</comment>
<comment type="pathway">
    <text evidence="1">Purine metabolism; GMP biosynthesis; GMP from XMP (L-Gln route): step 1/1.</text>
</comment>
<comment type="subunit">
    <text evidence="1">Homodimer.</text>
</comment>
<proteinExistence type="inferred from homology"/>
<protein>
    <recommendedName>
        <fullName evidence="1">GMP synthase [glutamine-hydrolyzing]</fullName>
        <ecNumber evidence="1">6.3.5.2</ecNumber>
    </recommendedName>
    <alternativeName>
        <fullName evidence="1">GMP synthetase</fullName>
    </alternativeName>
    <alternativeName>
        <fullName evidence="1">Glutamine amidotransferase</fullName>
    </alternativeName>
</protein>